<sequence>MPRQHAIEDYRNFGIMAHIDAGKTTTTERILYYTGKSHKIGEVHEGAATMDWMEQEQERGITITSAATTAFWAGKRLNIIDTPGHVDFTIEVERSLRVLDGAVCVLDSNQGVEPQTETVWRQGDKYKVPRIVFANKMDKTGADFFKCLADIVDRLGAKPIAIQLPIGAENNFKGLVDLVKMKGIVWNDESLGAKFDYVDIPEDLVEQAKEYREKMVEAAVELDDDALAAFLDGNEPDEATLKRLIRKAVLTGAFYPVLCGSAFKNKGVQPLLDAVVDYLPSPIDVPAIKGTDDRGNEVVRKADDKEPLALLAFKIMDDPFVGTITFCRIYSGVLQSGTGVVNSTREKKERIGRMLLMHANNREDIKEAYAGDIVALAGLKEARTGDTLCDPDKQVILEKMEFPEPVIEIAIEPKSKADQEKLGVALAKLAAEDPSFRVSTDQESGQTILKGMGELHLDIKVDILKRTYKVDANIGAPQVAFRERVTKKAEVKYTHKKQTGGTGQFAEVSIVVEPNEPGKGYEFESKIVGGAVPKEYIPGVEKGLNSVMSSGVVAGFPVVDVKVQLVDGKYHDVDSSALAFEIASRAAFREALQKGKSVLLEPIMKVEVVTPEDYTGSVIGDLNSRRGQIQGQDMRGNANVINAMVPLMNMFGYVNNLRSMSQGRATFTMQFDHYAEAPANVSAEVQKKFA</sequence>
<feature type="chain" id="PRO_0000091087" description="Elongation factor G">
    <location>
        <begin position="1"/>
        <end position="690"/>
    </location>
</feature>
<feature type="domain" description="tr-type G">
    <location>
        <begin position="8"/>
        <end position="283"/>
    </location>
</feature>
<feature type="binding site" evidence="1">
    <location>
        <begin position="17"/>
        <end position="24"/>
    </location>
    <ligand>
        <name>GTP</name>
        <dbReference type="ChEBI" id="CHEBI:37565"/>
    </ligand>
</feature>
<feature type="binding site" evidence="1">
    <location>
        <begin position="81"/>
        <end position="85"/>
    </location>
    <ligand>
        <name>GTP</name>
        <dbReference type="ChEBI" id="CHEBI:37565"/>
    </ligand>
</feature>
<feature type="binding site" evidence="1">
    <location>
        <begin position="135"/>
        <end position="138"/>
    </location>
    <ligand>
        <name>GTP</name>
        <dbReference type="ChEBI" id="CHEBI:37565"/>
    </ligand>
</feature>
<accession>Q89J81</accession>
<protein>
    <recommendedName>
        <fullName evidence="1">Elongation factor G</fullName>
        <shortName evidence="1">EF-G</shortName>
    </recommendedName>
</protein>
<gene>
    <name evidence="1" type="primary">fusA</name>
    <name type="ordered locus">bll5403</name>
</gene>
<name>EFG_BRADU</name>
<keyword id="KW-0963">Cytoplasm</keyword>
<keyword id="KW-0251">Elongation factor</keyword>
<keyword id="KW-0342">GTP-binding</keyword>
<keyword id="KW-0547">Nucleotide-binding</keyword>
<keyword id="KW-0648">Protein biosynthesis</keyword>
<keyword id="KW-1185">Reference proteome</keyword>
<reference key="1">
    <citation type="journal article" date="2002" name="DNA Res.">
        <title>Complete genomic sequence of nitrogen-fixing symbiotic bacterium Bradyrhizobium japonicum USDA110.</title>
        <authorList>
            <person name="Kaneko T."/>
            <person name="Nakamura Y."/>
            <person name="Sato S."/>
            <person name="Minamisawa K."/>
            <person name="Uchiumi T."/>
            <person name="Sasamoto S."/>
            <person name="Watanabe A."/>
            <person name="Idesawa K."/>
            <person name="Iriguchi M."/>
            <person name="Kawashima K."/>
            <person name="Kohara M."/>
            <person name="Matsumoto M."/>
            <person name="Shimpo S."/>
            <person name="Tsuruoka H."/>
            <person name="Wada T."/>
            <person name="Yamada M."/>
            <person name="Tabata S."/>
        </authorList>
    </citation>
    <scope>NUCLEOTIDE SEQUENCE [LARGE SCALE GENOMIC DNA]</scope>
    <source>
        <strain>JCM 10833 / BCRC 13528 / IAM 13628 / NBRC 14792 / USDA 110</strain>
    </source>
</reference>
<organism>
    <name type="scientific">Bradyrhizobium diazoefficiens (strain JCM 10833 / BCRC 13528 / IAM 13628 / NBRC 14792 / USDA 110)</name>
    <dbReference type="NCBI Taxonomy" id="224911"/>
    <lineage>
        <taxon>Bacteria</taxon>
        <taxon>Pseudomonadati</taxon>
        <taxon>Pseudomonadota</taxon>
        <taxon>Alphaproteobacteria</taxon>
        <taxon>Hyphomicrobiales</taxon>
        <taxon>Nitrobacteraceae</taxon>
        <taxon>Bradyrhizobium</taxon>
    </lineage>
</organism>
<dbReference type="EMBL" id="BA000040">
    <property type="protein sequence ID" value="BAC50668.1"/>
    <property type="molecule type" value="Genomic_DNA"/>
</dbReference>
<dbReference type="RefSeq" id="NP_772043.1">
    <property type="nucleotide sequence ID" value="NC_004463.1"/>
</dbReference>
<dbReference type="RefSeq" id="WP_011088153.1">
    <property type="nucleotide sequence ID" value="NC_004463.1"/>
</dbReference>
<dbReference type="SMR" id="Q89J81"/>
<dbReference type="FunCoup" id="Q89J81">
    <property type="interactions" value="769"/>
</dbReference>
<dbReference type="STRING" id="224911.AAV28_24425"/>
<dbReference type="EnsemblBacteria" id="BAC50668">
    <property type="protein sequence ID" value="BAC50668"/>
    <property type="gene ID" value="BAC50668"/>
</dbReference>
<dbReference type="GeneID" id="46492401"/>
<dbReference type="KEGG" id="bja:bll5403"/>
<dbReference type="PATRIC" id="fig|224911.44.peg.5302"/>
<dbReference type="eggNOG" id="COG0480">
    <property type="taxonomic scope" value="Bacteria"/>
</dbReference>
<dbReference type="HOGENOM" id="CLU_002794_4_2_5"/>
<dbReference type="InParanoid" id="Q89J81"/>
<dbReference type="OrthoDB" id="9802948at2"/>
<dbReference type="PhylomeDB" id="Q89J81"/>
<dbReference type="Proteomes" id="UP000002526">
    <property type="component" value="Chromosome"/>
</dbReference>
<dbReference type="GO" id="GO:0005737">
    <property type="term" value="C:cytoplasm"/>
    <property type="evidence" value="ECO:0007669"/>
    <property type="project" value="UniProtKB-SubCell"/>
</dbReference>
<dbReference type="GO" id="GO:0005525">
    <property type="term" value="F:GTP binding"/>
    <property type="evidence" value="ECO:0007669"/>
    <property type="project" value="UniProtKB-UniRule"/>
</dbReference>
<dbReference type="GO" id="GO:0003924">
    <property type="term" value="F:GTPase activity"/>
    <property type="evidence" value="ECO:0007669"/>
    <property type="project" value="InterPro"/>
</dbReference>
<dbReference type="GO" id="GO:0097216">
    <property type="term" value="F:guanosine tetraphosphate binding"/>
    <property type="evidence" value="ECO:0007669"/>
    <property type="project" value="UniProtKB-ARBA"/>
</dbReference>
<dbReference type="GO" id="GO:0003746">
    <property type="term" value="F:translation elongation factor activity"/>
    <property type="evidence" value="ECO:0007669"/>
    <property type="project" value="UniProtKB-UniRule"/>
</dbReference>
<dbReference type="GO" id="GO:0032790">
    <property type="term" value="P:ribosome disassembly"/>
    <property type="evidence" value="ECO:0000318"/>
    <property type="project" value="GO_Central"/>
</dbReference>
<dbReference type="CDD" id="cd01886">
    <property type="entry name" value="EF-G"/>
    <property type="match status" value="1"/>
</dbReference>
<dbReference type="CDD" id="cd16262">
    <property type="entry name" value="EFG_III"/>
    <property type="match status" value="1"/>
</dbReference>
<dbReference type="CDD" id="cd01434">
    <property type="entry name" value="EFG_mtEFG1_IV"/>
    <property type="match status" value="1"/>
</dbReference>
<dbReference type="CDD" id="cd03713">
    <property type="entry name" value="EFG_mtEFG_C"/>
    <property type="match status" value="1"/>
</dbReference>
<dbReference type="CDD" id="cd04088">
    <property type="entry name" value="EFG_mtEFG_II"/>
    <property type="match status" value="1"/>
</dbReference>
<dbReference type="FunFam" id="2.40.30.10:FF:000006">
    <property type="entry name" value="Elongation factor G"/>
    <property type="match status" value="1"/>
</dbReference>
<dbReference type="FunFam" id="3.30.230.10:FF:000003">
    <property type="entry name" value="Elongation factor G"/>
    <property type="match status" value="1"/>
</dbReference>
<dbReference type="FunFam" id="3.30.70.240:FF:000001">
    <property type="entry name" value="Elongation factor G"/>
    <property type="match status" value="1"/>
</dbReference>
<dbReference type="FunFam" id="3.30.70.870:FF:000001">
    <property type="entry name" value="Elongation factor G"/>
    <property type="match status" value="1"/>
</dbReference>
<dbReference type="FunFam" id="3.40.50.300:FF:000029">
    <property type="entry name" value="Elongation factor G"/>
    <property type="match status" value="1"/>
</dbReference>
<dbReference type="Gene3D" id="3.30.230.10">
    <property type="match status" value="1"/>
</dbReference>
<dbReference type="Gene3D" id="3.30.70.240">
    <property type="match status" value="1"/>
</dbReference>
<dbReference type="Gene3D" id="3.30.70.870">
    <property type="entry name" value="Elongation Factor G (Translational Gtpase), domain 3"/>
    <property type="match status" value="1"/>
</dbReference>
<dbReference type="Gene3D" id="3.40.50.300">
    <property type="entry name" value="P-loop containing nucleotide triphosphate hydrolases"/>
    <property type="match status" value="1"/>
</dbReference>
<dbReference type="Gene3D" id="2.40.30.10">
    <property type="entry name" value="Translation factors"/>
    <property type="match status" value="1"/>
</dbReference>
<dbReference type="HAMAP" id="MF_00054_B">
    <property type="entry name" value="EF_G_EF_2_B"/>
    <property type="match status" value="1"/>
</dbReference>
<dbReference type="InterPro" id="IPR041095">
    <property type="entry name" value="EFG_II"/>
</dbReference>
<dbReference type="InterPro" id="IPR009022">
    <property type="entry name" value="EFG_III"/>
</dbReference>
<dbReference type="InterPro" id="IPR035647">
    <property type="entry name" value="EFG_III/V"/>
</dbReference>
<dbReference type="InterPro" id="IPR047872">
    <property type="entry name" value="EFG_IV"/>
</dbReference>
<dbReference type="InterPro" id="IPR035649">
    <property type="entry name" value="EFG_V"/>
</dbReference>
<dbReference type="InterPro" id="IPR000640">
    <property type="entry name" value="EFG_V-like"/>
</dbReference>
<dbReference type="InterPro" id="IPR004161">
    <property type="entry name" value="EFTu-like_2"/>
</dbReference>
<dbReference type="InterPro" id="IPR031157">
    <property type="entry name" value="G_TR_CS"/>
</dbReference>
<dbReference type="InterPro" id="IPR027417">
    <property type="entry name" value="P-loop_NTPase"/>
</dbReference>
<dbReference type="InterPro" id="IPR020568">
    <property type="entry name" value="Ribosomal_Su5_D2-typ_SF"/>
</dbReference>
<dbReference type="InterPro" id="IPR014721">
    <property type="entry name" value="Ribsml_uS5_D2-typ_fold_subgr"/>
</dbReference>
<dbReference type="InterPro" id="IPR005225">
    <property type="entry name" value="Small_GTP-bd"/>
</dbReference>
<dbReference type="InterPro" id="IPR000795">
    <property type="entry name" value="T_Tr_GTP-bd_dom"/>
</dbReference>
<dbReference type="InterPro" id="IPR009000">
    <property type="entry name" value="Transl_B-barrel_sf"/>
</dbReference>
<dbReference type="InterPro" id="IPR004540">
    <property type="entry name" value="Transl_elong_EFG/EF2"/>
</dbReference>
<dbReference type="InterPro" id="IPR005517">
    <property type="entry name" value="Transl_elong_EFG/EF2_IV"/>
</dbReference>
<dbReference type="NCBIfam" id="TIGR00484">
    <property type="entry name" value="EF-G"/>
    <property type="match status" value="1"/>
</dbReference>
<dbReference type="NCBIfam" id="NF009379">
    <property type="entry name" value="PRK12740.1-3"/>
    <property type="match status" value="1"/>
</dbReference>
<dbReference type="NCBIfam" id="NF009381">
    <property type="entry name" value="PRK12740.1-5"/>
    <property type="match status" value="1"/>
</dbReference>
<dbReference type="NCBIfam" id="TIGR00231">
    <property type="entry name" value="small_GTP"/>
    <property type="match status" value="1"/>
</dbReference>
<dbReference type="PANTHER" id="PTHR43261:SF1">
    <property type="entry name" value="RIBOSOME-RELEASING FACTOR 2, MITOCHONDRIAL"/>
    <property type="match status" value="1"/>
</dbReference>
<dbReference type="PANTHER" id="PTHR43261">
    <property type="entry name" value="TRANSLATION ELONGATION FACTOR G-RELATED"/>
    <property type="match status" value="1"/>
</dbReference>
<dbReference type="Pfam" id="PF00679">
    <property type="entry name" value="EFG_C"/>
    <property type="match status" value="1"/>
</dbReference>
<dbReference type="Pfam" id="PF14492">
    <property type="entry name" value="EFG_III"/>
    <property type="match status" value="1"/>
</dbReference>
<dbReference type="Pfam" id="PF03764">
    <property type="entry name" value="EFG_IV"/>
    <property type="match status" value="1"/>
</dbReference>
<dbReference type="Pfam" id="PF00009">
    <property type="entry name" value="GTP_EFTU"/>
    <property type="match status" value="1"/>
</dbReference>
<dbReference type="Pfam" id="PF03144">
    <property type="entry name" value="GTP_EFTU_D2"/>
    <property type="match status" value="1"/>
</dbReference>
<dbReference type="PRINTS" id="PR00315">
    <property type="entry name" value="ELONGATNFCT"/>
</dbReference>
<dbReference type="SMART" id="SM00838">
    <property type="entry name" value="EFG_C"/>
    <property type="match status" value="1"/>
</dbReference>
<dbReference type="SMART" id="SM00889">
    <property type="entry name" value="EFG_IV"/>
    <property type="match status" value="1"/>
</dbReference>
<dbReference type="SUPFAM" id="SSF54980">
    <property type="entry name" value="EF-G C-terminal domain-like"/>
    <property type="match status" value="2"/>
</dbReference>
<dbReference type="SUPFAM" id="SSF52540">
    <property type="entry name" value="P-loop containing nucleoside triphosphate hydrolases"/>
    <property type="match status" value="1"/>
</dbReference>
<dbReference type="SUPFAM" id="SSF54211">
    <property type="entry name" value="Ribosomal protein S5 domain 2-like"/>
    <property type="match status" value="1"/>
</dbReference>
<dbReference type="SUPFAM" id="SSF50447">
    <property type="entry name" value="Translation proteins"/>
    <property type="match status" value="1"/>
</dbReference>
<dbReference type="PROSITE" id="PS00301">
    <property type="entry name" value="G_TR_1"/>
    <property type="match status" value="1"/>
</dbReference>
<dbReference type="PROSITE" id="PS51722">
    <property type="entry name" value="G_TR_2"/>
    <property type="match status" value="1"/>
</dbReference>
<evidence type="ECO:0000255" key="1">
    <source>
        <dbReference type="HAMAP-Rule" id="MF_00054"/>
    </source>
</evidence>
<proteinExistence type="inferred from homology"/>
<comment type="function">
    <text evidence="1">Catalyzes the GTP-dependent ribosomal translocation step during translation elongation. During this step, the ribosome changes from the pre-translocational (PRE) to the post-translocational (POST) state as the newly formed A-site-bound peptidyl-tRNA and P-site-bound deacylated tRNA move to the P and E sites, respectively. Catalyzes the coordinated movement of the two tRNA molecules, the mRNA and conformational changes in the ribosome.</text>
</comment>
<comment type="subcellular location">
    <subcellularLocation>
        <location evidence="1">Cytoplasm</location>
    </subcellularLocation>
</comment>
<comment type="similarity">
    <text evidence="1">Belongs to the TRAFAC class translation factor GTPase superfamily. Classic translation factor GTPase family. EF-G/EF-2 subfamily.</text>
</comment>